<comment type="function">
    <text evidence="1">Carrier of the growing fatty acid chain in fatty acid biosynthesis.</text>
</comment>
<comment type="pathway">
    <text evidence="1">Lipid metabolism; fatty acid biosynthesis.</text>
</comment>
<comment type="subcellular location">
    <subcellularLocation>
        <location evidence="1">Cytoplasm</location>
    </subcellularLocation>
</comment>
<comment type="PTM">
    <text evidence="1">4'-phosphopantetheine is transferred from CoA to a specific serine of apo-ACP by AcpS. This modification is essential for activity because fatty acids are bound in thioester linkage to the sulfhydryl of the prosthetic group.</text>
</comment>
<comment type="similarity">
    <text evidence="1">Belongs to the acyl carrier protein (ACP) family.</text>
</comment>
<sequence>MATVFERVKKVSVEQLGAEEKDVVLTASFADDLGADSLDQVELIMALETEFGTPETKFEIPDTDAEKLKTVQAVVDYLKSKGIKDS</sequence>
<keyword id="KW-0963">Cytoplasm</keyword>
<keyword id="KW-0275">Fatty acid biosynthesis</keyword>
<keyword id="KW-0276">Fatty acid metabolism</keyword>
<keyword id="KW-0444">Lipid biosynthesis</keyword>
<keyword id="KW-0443">Lipid metabolism</keyword>
<keyword id="KW-0596">Phosphopantetheine</keyword>
<keyword id="KW-0597">Phosphoprotein</keyword>
<dbReference type="EMBL" id="AJ965256">
    <property type="protein sequence ID" value="CAI83286.1"/>
    <property type="molecule type" value="Genomic_DNA"/>
</dbReference>
<dbReference type="RefSeq" id="WP_011309637.1">
    <property type="nucleotide sequence ID" value="NC_007356.1"/>
</dbReference>
<dbReference type="SMR" id="Q3ZYI8"/>
<dbReference type="KEGG" id="deh:cbdbA1208"/>
<dbReference type="HOGENOM" id="CLU_108696_5_1_0"/>
<dbReference type="UniPathway" id="UPA00094"/>
<dbReference type="Proteomes" id="UP000000433">
    <property type="component" value="Chromosome"/>
</dbReference>
<dbReference type="GO" id="GO:0005829">
    <property type="term" value="C:cytosol"/>
    <property type="evidence" value="ECO:0007669"/>
    <property type="project" value="TreeGrafter"/>
</dbReference>
<dbReference type="GO" id="GO:0016020">
    <property type="term" value="C:membrane"/>
    <property type="evidence" value="ECO:0007669"/>
    <property type="project" value="GOC"/>
</dbReference>
<dbReference type="GO" id="GO:0000035">
    <property type="term" value="F:acyl binding"/>
    <property type="evidence" value="ECO:0007669"/>
    <property type="project" value="TreeGrafter"/>
</dbReference>
<dbReference type="GO" id="GO:0000036">
    <property type="term" value="F:acyl carrier activity"/>
    <property type="evidence" value="ECO:0007669"/>
    <property type="project" value="UniProtKB-UniRule"/>
</dbReference>
<dbReference type="GO" id="GO:0009245">
    <property type="term" value="P:lipid A biosynthetic process"/>
    <property type="evidence" value="ECO:0007669"/>
    <property type="project" value="TreeGrafter"/>
</dbReference>
<dbReference type="Gene3D" id="1.10.1200.10">
    <property type="entry name" value="ACP-like"/>
    <property type="match status" value="1"/>
</dbReference>
<dbReference type="HAMAP" id="MF_01217">
    <property type="entry name" value="Acyl_carrier"/>
    <property type="match status" value="1"/>
</dbReference>
<dbReference type="InterPro" id="IPR003231">
    <property type="entry name" value="ACP"/>
</dbReference>
<dbReference type="InterPro" id="IPR036736">
    <property type="entry name" value="ACP-like_sf"/>
</dbReference>
<dbReference type="InterPro" id="IPR009081">
    <property type="entry name" value="PP-bd_ACP"/>
</dbReference>
<dbReference type="InterPro" id="IPR006162">
    <property type="entry name" value="Ppantetheine_attach_site"/>
</dbReference>
<dbReference type="NCBIfam" id="TIGR00517">
    <property type="entry name" value="acyl_carrier"/>
    <property type="match status" value="1"/>
</dbReference>
<dbReference type="NCBIfam" id="NF002148">
    <property type="entry name" value="PRK00982.1-2"/>
    <property type="match status" value="1"/>
</dbReference>
<dbReference type="NCBIfam" id="NF002150">
    <property type="entry name" value="PRK00982.1-4"/>
    <property type="match status" value="1"/>
</dbReference>
<dbReference type="NCBIfam" id="NF002151">
    <property type="entry name" value="PRK00982.1-5"/>
    <property type="match status" value="1"/>
</dbReference>
<dbReference type="PANTHER" id="PTHR20863">
    <property type="entry name" value="ACYL CARRIER PROTEIN"/>
    <property type="match status" value="1"/>
</dbReference>
<dbReference type="PANTHER" id="PTHR20863:SF76">
    <property type="entry name" value="CARRIER DOMAIN-CONTAINING PROTEIN"/>
    <property type="match status" value="1"/>
</dbReference>
<dbReference type="Pfam" id="PF00550">
    <property type="entry name" value="PP-binding"/>
    <property type="match status" value="1"/>
</dbReference>
<dbReference type="SUPFAM" id="SSF47336">
    <property type="entry name" value="ACP-like"/>
    <property type="match status" value="1"/>
</dbReference>
<dbReference type="PROSITE" id="PS50075">
    <property type="entry name" value="CARRIER"/>
    <property type="match status" value="1"/>
</dbReference>
<dbReference type="PROSITE" id="PS00012">
    <property type="entry name" value="PHOSPHOPANTETHEINE"/>
    <property type="match status" value="1"/>
</dbReference>
<evidence type="ECO:0000255" key="1">
    <source>
        <dbReference type="HAMAP-Rule" id="MF_01217"/>
    </source>
</evidence>
<evidence type="ECO:0000255" key="2">
    <source>
        <dbReference type="PROSITE-ProRule" id="PRU00258"/>
    </source>
</evidence>
<reference key="1">
    <citation type="journal article" date="2005" name="Nat. Biotechnol.">
        <title>Genome sequence of the chlorinated compound-respiring bacterium Dehalococcoides species strain CBDB1.</title>
        <authorList>
            <person name="Kube M."/>
            <person name="Beck A."/>
            <person name="Zinder S.H."/>
            <person name="Kuhl H."/>
            <person name="Reinhardt R."/>
            <person name="Adrian L."/>
        </authorList>
    </citation>
    <scope>NUCLEOTIDE SEQUENCE [LARGE SCALE GENOMIC DNA]</scope>
    <source>
        <strain>CBDB1</strain>
    </source>
</reference>
<organism>
    <name type="scientific">Dehalococcoides mccartyi (strain CBDB1)</name>
    <dbReference type="NCBI Taxonomy" id="255470"/>
    <lineage>
        <taxon>Bacteria</taxon>
        <taxon>Bacillati</taxon>
        <taxon>Chloroflexota</taxon>
        <taxon>Dehalococcoidia</taxon>
        <taxon>Dehalococcoidales</taxon>
        <taxon>Dehalococcoidaceae</taxon>
        <taxon>Dehalococcoides</taxon>
    </lineage>
</organism>
<protein>
    <recommendedName>
        <fullName evidence="1">Acyl carrier protein</fullName>
        <shortName evidence="1">ACP</shortName>
    </recommendedName>
</protein>
<feature type="chain" id="PRO_1000066598" description="Acyl carrier protein">
    <location>
        <begin position="1"/>
        <end position="86"/>
    </location>
</feature>
<feature type="domain" description="Carrier" evidence="2">
    <location>
        <begin position="2"/>
        <end position="82"/>
    </location>
</feature>
<feature type="modified residue" description="O-(pantetheine 4'-phosphoryl)serine" evidence="2">
    <location>
        <position position="37"/>
    </location>
</feature>
<accession>Q3ZYI8</accession>
<gene>
    <name evidence="1" type="primary">acpP</name>
    <name type="ordered locus">cbdbA1208</name>
</gene>
<proteinExistence type="inferred from homology"/>
<name>ACP_DEHMC</name>